<comment type="function">
    <text evidence="1">Catalyzes the reversible conversion of 2-phosphoglycerate (2-PG) into phosphoenolpyruvate (PEP). It is essential for the degradation of carbohydrates via glycolysis.</text>
</comment>
<comment type="catalytic activity">
    <reaction evidence="1">
        <text>(2R)-2-phosphoglycerate = phosphoenolpyruvate + H2O</text>
        <dbReference type="Rhea" id="RHEA:10164"/>
        <dbReference type="ChEBI" id="CHEBI:15377"/>
        <dbReference type="ChEBI" id="CHEBI:58289"/>
        <dbReference type="ChEBI" id="CHEBI:58702"/>
        <dbReference type="EC" id="4.2.1.11"/>
    </reaction>
</comment>
<comment type="cofactor">
    <cofactor evidence="1">
        <name>Mg(2+)</name>
        <dbReference type="ChEBI" id="CHEBI:18420"/>
    </cofactor>
    <text evidence="1">Binds a second Mg(2+) ion via substrate during catalysis.</text>
</comment>
<comment type="pathway">
    <text evidence="1">Carbohydrate degradation; glycolysis; pyruvate from D-glyceraldehyde 3-phosphate: step 4/5.</text>
</comment>
<comment type="subcellular location">
    <subcellularLocation>
        <location evidence="1">Cytoplasm</location>
    </subcellularLocation>
    <subcellularLocation>
        <location evidence="1">Secreted</location>
    </subcellularLocation>
    <subcellularLocation>
        <location evidence="1">Cell surface</location>
    </subcellularLocation>
    <text evidence="1">Fractions of enolase are present in both the cytoplasm and on the cell surface.</text>
</comment>
<comment type="similarity">
    <text evidence="1">Belongs to the enolase family.</text>
</comment>
<reference key="1">
    <citation type="submission" date="2006-03" db="EMBL/GenBank/DDBJ databases">
        <title>Complete sequence of chromosome of Nitrobacter hamburgensis X14.</title>
        <authorList>
            <consortium name="US DOE Joint Genome Institute"/>
            <person name="Copeland A."/>
            <person name="Lucas S."/>
            <person name="Lapidus A."/>
            <person name="Barry K."/>
            <person name="Detter J.C."/>
            <person name="Glavina del Rio T."/>
            <person name="Hammon N."/>
            <person name="Israni S."/>
            <person name="Dalin E."/>
            <person name="Tice H."/>
            <person name="Pitluck S."/>
            <person name="Chain P."/>
            <person name="Malfatti S."/>
            <person name="Shin M."/>
            <person name="Vergez L."/>
            <person name="Schmutz J."/>
            <person name="Larimer F."/>
            <person name="Land M."/>
            <person name="Hauser L."/>
            <person name="Kyrpides N."/>
            <person name="Ivanova N."/>
            <person name="Ward B."/>
            <person name="Arp D."/>
            <person name="Klotz M."/>
            <person name="Stein L."/>
            <person name="O'Mullan G."/>
            <person name="Starkenburg S."/>
            <person name="Sayavedra L."/>
            <person name="Poret-Peterson A.T."/>
            <person name="Gentry M.E."/>
            <person name="Bruce D."/>
            <person name="Richardson P."/>
        </authorList>
    </citation>
    <scope>NUCLEOTIDE SEQUENCE [LARGE SCALE GENOMIC DNA]</scope>
    <source>
        <strain>DSM 10229 / NCIMB 13809 / X14</strain>
    </source>
</reference>
<accession>Q1QMI9</accession>
<feature type="chain" id="PRO_0000267063" description="Enolase">
    <location>
        <begin position="1"/>
        <end position="427"/>
    </location>
</feature>
<feature type="active site" description="Proton donor" evidence="1">
    <location>
        <position position="205"/>
    </location>
</feature>
<feature type="active site" description="Proton acceptor" evidence="1">
    <location>
        <position position="337"/>
    </location>
</feature>
<feature type="binding site" evidence="1">
    <location>
        <position position="163"/>
    </location>
    <ligand>
        <name>(2R)-2-phosphoglycerate</name>
        <dbReference type="ChEBI" id="CHEBI:58289"/>
    </ligand>
</feature>
<feature type="binding site" evidence="1">
    <location>
        <position position="242"/>
    </location>
    <ligand>
        <name>Mg(2+)</name>
        <dbReference type="ChEBI" id="CHEBI:18420"/>
    </ligand>
</feature>
<feature type="binding site" evidence="1">
    <location>
        <position position="285"/>
    </location>
    <ligand>
        <name>Mg(2+)</name>
        <dbReference type="ChEBI" id="CHEBI:18420"/>
    </ligand>
</feature>
<feature type="binding site" evidence="1">
    <location>
        <position position="312"/>
    </location>
    <ligand>
        <name>Mg(2+)</name>
        <dbReference type="ChEBI" id="CHEBI:18420"/>
    </ligand>
</feature>
<feature type="binding site" evidence="1">
    <location>
        <position position="337"/>
    </location>
    <ligand>
        <name>(2R)-2-phosphoglycerate</name>
        <dbReference type="ChEBI" id="CHEBI:58289"/>
    </ligand>
</feature>
<feature type="binding site" evidence="1">
    <location>
        <position position="366"/>
    </location>
    <ligand>
        <name>(2R)-2-phosphoglycerate</name>
        <dbReference type="ChEBI" id="CHEBI:58289"/>
    </ligand>
</feature>
<feature type="binding site" evidence="1">
    <location>
        <position position="367"/>
    </location>
    <ligand>
        <name>(2R)-2-phosphoglycerate</name>
        <dbReference type="ChEBI" id="CHEBI:58289"/>
    </ligand>
</feature>
<feature type="binding site" evidence="1">
    <location>
        <position position="388"/>
    </location>
    <ligand>
        <name>(2R)-2-phosphoglycerate</name>
        <dbReference type="ChEBI" id="CHEBI:58289"/>
    </ligand>
</feature>
<dbReference type="EC" id="4.2.1.11" evidence="1"/>
<dbReference type="EMBL" id="CP000319">
    <property type="protein sequence ID" value="ABE62558.1"/>
    <property type="molecule type" value="Genomic_DNA"/>
</dbReference>
<dbReference type="RefSeq" id="WP_011510240.1">
    <property type="nucleotide sequence ID" value="NC_007964.1"/>
</dbReference>
<dbReference type="SMR" id="Q1QMI9"/>
<dbReference type="STRING" id="323097.Nham_1743"/>
<dbReference type="KEGG" id="nha:Nham_1743"/>
<dbReference type="eggNOG" id="COG0148">
    <property type="taxonomic scope" value="Bacteria"/>
</dbReference>
<dbReference type="HOGENOM" id="CLU_031223_2_1_5"/>
<dbReference type="OrthoDB" id="9804716at2"/>
<dbReference type="UniPathway" id="UPA00109">
    <property type="reaction ID" value="UER00187"/>
</dbReference>
<dbReference type="Proteomes" id="UP000001953">
    <property type="component" value="Chromosome"/>
</dbReference>
<dbReference type="GO" id="GO:0009986">
    <property type="term" value="C:cell surface"/>
    <property type="evidence" value="ECO:0007669"/>
    <property type="project" value="UniProtKB-SubCell"/>
</dbReference>
<dbReference type="GO" id="GO:0005576">
    <property type="term" value="C:extracellular region"/>
    <property type="evidence" value="ECO:0007669"/>
    <property type="project" value="UniProtKB-SubCell"/>
</dbReference>
<dbReference type="GO" id="GO:0000015">
    <property type="term" value="C:phosphopyruvate hydratase complex"/>
    <property type="evidence" value="ECO:0007669"/>
    <property type="project" value="InterPro"/>
</dbReference>
<dbReference type="GO" id="GO:0000287">
    <property type="term" value="F:magnesium ion binding"/>
    <property type="evidence" value="ECO:0007669"/>
    <property type="project" value="UniProtKB-UniRule"/>
</dbReference>
<dbReference type="GO" id="GO:0004634">
    <property type="term" value="F:phosphopyruvate hydratase activity"/>
    <property type="evidence" value="ECO:0007669"/>
    <property type="project" value="UniProtKB-UniRule"/>
</dbReference>
<dbReference type="GO" id="GO:0006096">
    <property type="term" value="P:glycolytic process"/>
    <property type="evidence" value="ECO:0007669"/>
    <property type="project" value="UniProtKB-UniRule"/>
</dbReference>
<dbReference type="CDD" id="cd03313">
    <property type="entry name" value="enolase"/>
    <property type="match status" value="1"/>
</dbReference>
<dbReference type="FunFam" id="3.20.20.120:FF:000001">
    <property type="entry name" value="Enolase"/>
    <property type="match status" value="1"/>
</dbReference>
<dbReference type="FunFam" id="3.30.390.10:FF:000001">
    <property type="entry name" value="Enolase"/>
    <property type="match status" value="1"/>
</dbReference>
<dbReference type="Gene3D" id="3.20.20.120">
    <property type="entry name" value="Enolase-like C-terminal domain"/>
    <property type="match status" value="1"/>
</dbReference>
<dbReference type="Gene3D" id="3.30.390.10">
    <property type="entry name" value="Enolase-like, N-terminal domain"/>
    <property type="match status" value="1"/>
</dbReference>
<dbReference type="HAMAP" id="MF_00318">
    <property type="entry name" value="Enolase"/>
    <property type="match status" value="1"/>
</dbReference>
<dbReference type="InterPro" id="IPR000941">
    <property type="entry name" value="Enolase"/>
</dbReference>
<dbReference type="InterPro" id="IPR036849">
    <property type="entry name" value="Enolase-like_C_sf"/>
</dbReference>
<dbReference type="InterPro" id="IPR029017">
    <property type="entry name" value="Enolase-like_N"/>
</dbReference>
<dbReference type="InterPro" id="IPR020810">
    <property type="entry name" value="Enolase_C"/>
</dbReference>
<dbReference type="InterPro" id="IPR020809">
    <property type="entry name" value="Enolase_CS"/>
</dbReference>
<dbReference type="InterPro" id="IPR020811">
    <property type="entry name" value="Enolase_N"/>
</dbReference>
<dbReference type="NCBIfam" id="TIGR01060">
    <property type="entry name" value="eno"/>
    <property type="match status" value="1"/>
</dbReference>
<dbReference type="PANTHER" id="PTHR11902">
    <property type="entry name" value="ENOLASE"/>
    <property type="match status" value="1"/>
</dbReference>
<dbReference type="PANTHER" id="PTHR11902:SF1">
    <property type="entry name" value="ENOLASE"/>
    <property type="match status" value="1"/>
</dbReference>
<dbReference type="Pfam" id="PF00113">
    <property type="entry name" value="Enolase_C"/>
    <property type="match status" value="1"/>
</dbReference>
<dbReference type="Pfam" id="PF03952">
    <property type="entry name" value="Enolase_N"/>
    <property type="match status" value="1"/>
</dbReference>
<dbReference type="PIRSF" id="PIRSF001400">
    <property type="entry name" value="Enolase"/>
    <property type="match status" value="1"/>
</dbReference>
<dbReference type="PRINTS" id="PR00148">
    <property type="entry name" value="ENOLASE"/>
</dbReference>
<dbReference type="SFLD" id="SFLDF00002">
    <property type="entry name" value="enolase"/>
    <property type="match status" value="1"/>
</dbReference>
<dbReference type="SFLD" id="SFLDG00178">
    <property type="entry name" value="enolase"/>
    <property type="match status" value="1"/>
</dbReference>
<dbReference type="SMART" id="SM01192">
    <property type="entry name" value="Enolase_C"/>
    <property type="match status" value="1"/>
</dbReference>
<dbReference type="SMART" id="SM01193">
    <property type="entry name" value="Enolase_N"/>
    <property type="match status" value="1"/>
</dbReference>
<dbReference type="SUPFAM" id="SSF51604">
    <property type="entry name" value="Enolase C-terminal domain-like"/>
    <property type="match status" value="1"/>
</dbReference>
<dbReference type="SUPFAM" id="SSF54826">
    <property type="entry name" value="Enolase N-terminal domain-like"/>
    <property type="match status" value="1"/>
</dbReference>
<dbReference type="PROSITE" id="PS00164">
    <property type="entry name" value="ENOLASE"/>
    <property type="match status" value="1"/>
</dbReference>
<keyword id="KW-0963">Cytoplasm</keyword>
<keyword id="KW-0324">Glycolysis</keyword>
<keyword id="KW-0456">Lyase</keyword>
<keyword id="KW-0460">Magnesium</keyword>
<keyword id="KW-0479">Metal-binding</keyword>
<keyword id="KW-1185">Reference proteome</keyword>
<keyword id="KW-0964">Secreted</keyword>
<sequence length="427" mass="45056">MTAIVDIIGREILDSRGNPTVEVDVALEDGAMGRAAVPSGASTGAHEAVELRDDDQTRYFGKGVRKAVDAINGEIFDAIGGMDAEQQAQIDEILIGLDGTANKSRLGANAILGVSLALARAAADSLDMPLYRYVGGVSARTLPVPMMNIVNGGVHADNPIDFQEFMIMPVGAKTFSEGLRCGSEIFHTLRAELKKAGHNTNVGDEGGFAPNLPSASAALDFIMGAIVKAGYKPGDDVALALDPAASEFFKDGKYVYAGEGKTRSIEEQARYLAKLASDYPIVSIEDGMAEDDFEGWKLLTDLIGKSCQLVGDDLFVTNVTRLADGIGKGLANSILIKVNQIGTLTETLAAVEMAYKAGYTAVMSHRSGETEDSTIADLAVATNCGQIKTGSLSRSDRAAKYNQLLRIEQQLGAQARYGGRAALKALA</sequence>
<protein>
    <recommendedName>
        <fullName evidence="1">Enolase</fullName>
        <ecNumber evidence="1">4.2.1.11</ecNumber>
    </recommendedName>
    <alternativeName>
        <fullName evidence="1">2-phospho-D-glycerate hydro-lyase</fullName>
    </alternativeName>
    <alternativeName>
        <fullName evidence="1">2-phosphoglycerate dehydratase</fullName>
    </alternativeName>
</protein>
<gene>
    <name evidence="1" type="primary">eno</name>
    <name type="ordered locus">Nham_1743</name>
</gene>
<evidence type="ECO:0000255" key="1">
    <source>
        <dbReference type="HAMAP-Rule" id="MF_00318"/>
    </source>
</evidence>
<proteinExistence type="inferred from homology"/>
<name>ENO_NITHX</name>
<organism>
    <name type="scientific">Nitrobacter hamburgensis (strain DSM 10229 / NCIMB 13809 / X14)</name>
    <dbReference type="NCBI Taxonomy" id="323097"/>
    <lineage>
        <taxon>Bacteria</taxon>
        <taxon>Pseudomonadati</taxon>
        <taxon>Pseudomonadota</taxon>
        <taxon>Alphaproteobacteria</taxon>
        <taxon>Hyphomicrobiales</taxon>
        <taxon>Nitrobacteraceae</taxon>
        <taxon>Nitrobacter</taxon>
    </lineage>
</organism>